<feature type="chain" id="PRO_0000136025" description="Shikimate dehydrogenase (NADP(+))">
    <location>
        <begin position="1"/>
        <end position="274"/>
    </location>
</feature>
<feature type="active site" description="Proton acceptor" evidence="1">
    <location>
        <position position="64"/>
    </location>
</feature>
<feature type="binding site" evidence="1">
    <location>
        <begin position="14"/>
        <end position="16"/>
    </location>
    <ligand>
        <name>shikimate</name>
        <dbReference type="ChEBI" id="CHEBI:36208"/>
    </ligand>
</feature>
<feature type="binding site" evidence="1">
    <location>
        <position position="60"/>
    </location>
    <ligand>
        <name>shikimate</name>
        <dbReference type="ChEBI" id="CHEBI:36208"/>
    </ligand>
</feature>
<feature type="binding site" evidence="1">
    <location>
        <position position="76"/>
    </location>
    <ligand>
        <name>NADP(+)</name>
        <dbReference type="ChEBI" id="CHEBI:58349"/>
    </ligand>
</feature>
<feature type="binding site" evidence="1">
    <location>
        <position position="85"/>
    </location>
    <ligand>
        <name>shikimate</name>
        <dbReference type="ChEBI" id="CHEBI:36208"/>
    </ligand>
</feature>
<feature type="binding site" evidence="1">
    <location>
        <position position="101"/>
    </location>
    <ligand>
        <name>shikimate</name>
        <dbReference type="ChEBI" id="CHEBI:36208"/>
    </ligand>
</feature>
<feature type="binding site" evidence="1">
    <location>
        <begin position="126"/>
        <end position="130"/>
    </location>
    <ligand>
        <name>NADP(+)</name>
        <dbReference type="ChEBI" id="CHEBI:58349"/>
    </ligand>
</feature>
<feature type="binding site" evidence="1">
    <location>
        <begin position="150"/>
        <end position="155"/>
    </location>
    <ligand>
        <name>NADP(+)</name>
        <dbReference type="ChEBI" id="CHEBI:58349"/>
    </ligand>
</feature>
<feature type="binding site" evidence="1">
    <location>
        <position position="214"/>
    </location>
    <ligand>
        <name>NADP(+)</name>
        <dbReference type="ChEBI" id="CHEBI:58349"/>
    </ligand>
</feature>
<feature type="binding site" evidence="1">
    <location>
        <position position="216"/>
    </location>
    <ligand>
        <name>shikimate</name>
        <dbReference type="ChEBI" id="CHEBI:36208"/>
    </ligand>
</feature>
<feature type="binding site" evidence="1">
    <location>
        <position position="238"/>
    </location>
    <ligand>
        <name>NADP(+)</name>
        <dbReference type="ChEBI" id="CHEBI:58349"/>
    </ligand>
</feature>
<feature type="sequence conflict" description="In Ref. 1; CAA59377." evidence="2" ref="1">
    <original>EL</original>
    <variation>DV</variation>
    <location>
        <begin position="116"/>
        <end position="117"/>
    </location>
</feature>
<comment type="function">
    <text evidence="1">Involved in the biosynthesis of the chorismate, which leads to the biosynthesis of aromatic amino acids. Catalyzes the reversible NADPH linked reduction of 3-dehydroshikimate (DHSA) to yield shikimate (SA).</text>
</comment>
<comment type="catalytic activity">
    <reaction evidence="1">
        <text>shikimate + NADP(+) = 3-dehydroshikimate + NADPH + H(+)</text>
        <dbReference type="Rhea" id="RHEA:17737"/>
        <dbReference type="ChEBI" id="CHEBI:15378"/>
        <dbReference type="ChEBI" id="CHEBI:16630"/>
        <dbReference type="ChEBI" id="CHEBI:36208"/>
        <dbReference type="ChEBI" id="CHEBI:57783"/>
        <dbReference type="ChEBI" id="CHEBI:58349"/>
        <dbReference type="EC" id="1.1.1.25"/>
    </reaction>
</comment>
<comment type="pathway">
    <text evidence="1">Metabolic intermediate biosynthesis; chorismate biosynthesis; chorismate from D-erythrose 4-phosphate and phosphoenolpyruvate: step 4/7.</text>
</comment>
<comment type="subunit">
    <text evidence="1">Homodimer.</text>
</comment>
<comment type="similarity">
    <text evidence="1">Belongs to the shikimate dehydrogenase family.</text>
</comment>
<reference key="1">
    <citation type="submission" date="1995-02" db="EMBL/GenBank/DDBJ databases">
        <title>Cloning and regulation of the Pseudomonas aeruginosa hemF gene encoding oxygen-dependent coproporphyrinogen III oxidase.</title>
        <authorList>
            <person name="Hungerer C."/>
            <person name="Troup B."/>
            <person name="Jahn D."/>
        </authorList>
    </citation>
    <scope>NUCLEOTIDE SEQUENCE [GENOMIC DNA]</scope>
    <source>
        <strain>ATCC 15692 / DSM 22644 / CIP 104116 / JCM 14847 / LMG 12228 / 1C / PRS 101 / PAO1</strain>
    </source>
</reference>
<reference key="2">
    <citation type="journal article" date="2000" name="Nature">
        <title>Complete genome sequence of Pseudomonas aeruginosa PAO1, an opportunistic pathogen.</title>
        <authorList>
            <person name="Stover C.K."/>
            <person name="Pham X.-Q.T."/>
            <person name="Erwin A.L."/>
            <person name="Mizoguchi S.D."/>
            <person name="Warrener P."/>
            <person name="Hickey M.J."/>
            <person name="Brinkman F.S.L."/>
            <person name="Hufnagle W.O."/>
            <person name="Kowalik D.J."/>
            <person name="Lagrou M."/>
            <person name="Garber R.L."/>
            <person name="Goltry L."/>
            <person name="Tolentino E."/>
            <person name="Westbrock-Wadman S."/>
            <person name="Yuan Y."/>
            <person name="Brody L.L."/>
            <person name="Coulter S.N."/>
            <person name="Folger K.R."/>
            <person name="Kas A."/>
            <person name="Larbig K."/>
            <person name="Lim R.M."/>
            <person name="Smith K.A."/>
            <person name="Spencer D.H."/>
            <person name="Wong G.K.-S."/>
            <person name="Wu Z."/>
            <person name="Paulsen I.T."/>
            <person name="Reizer J."/>
            <person name="Saier M.H. Jr."/>
            <person name="Hancock R.E.W."/>
            <person name="Lory S."/>
            <person name="Olson M.V."/>
        </authorList>
    </citation>
    <scope>NUCLEOTIDE SEQUENCE [LARGE SCALE GENOMIC DNA]</scope>
    <source>
        <strain>ATCC 15692 / DSM 22644 / CIP 104116 / JCM 14847 / LMG 12228 / 1C / PRS 101 / PAO1</strain>
    </source>
</reference>
<protein>
    <recommendedName>
        <fullName evidence="1">Shikimate dehydrogenase (NADP(+))</fullName>
        <shortName evidence="1">SDH</shortName>
        <ecNumber evidence="1">1.1.1.25</ecNumber>
    </recommendedName>
</protein>
<organism>
    <name type="scientific">Pseudomonas aeruginosa (strain ATCC 15692 / DSM 22644 / CIP 104116 / JCM 14847 / LMG 12228 / 1C / PRS 101 / PAO1)</name>
    <dbReference type="NCBI Taxonomy" id="208964"/>
    <lineage>
        <taxon>Bacteria</taxon>
        <taxon>Pseudomonadati</taxon>
        <taxon>Pseudomonadota</taxon>
        <taxon>Gammaproteobacteria</taxon>
        <taxon>Pseudomonadales</taxon>
        <taxon>Pseudomonadaceae</taxon>
        <taxon>Pseudomonas</taxon>
    </lineage>
</organism>
<dbReference type="EC" id="1.1.1.25" evidence="1"/>
<dbReference type="EMBL" id="X85015">
    <property type="protein sequence ID" value="CAA59377.1"/>
    <property type="molecule type" value="Genomic_DNA"/>
</dbReference>
<dbReference type="EMBL" id="AE004091">
    <property type="protein sequence ID" value="AAG03415.1"/>
    <property type="molecule type" value="Genomic_DNA"/>
</dbReference>
<dbReference type="PIR" id="G83641">
    <property type="entry name" value="G83641"/>
</dbReference>
<dbReference type="RefSeq" id="NP_248715.1">
    <property type="nucleotide sequence ID" value="NC_002516.2"/>
</dbReference>
<dbReference type="RefSeq" id="WP_003111201.1">
    <property type="nucleotide sequence ID" value="NZ_QZGE01000012.1"/>
</dbReference>
<dbReference type="SMR" id="P43904"/>
<dbReference type="FunCoup" id="P43904">
    <property type="interactions" value="187"/>
</dbReference>
<dbReference type="STRING" id="208964.PA0025"/>
<dbReference type="PaxDb" id="208964-PA0025"/>
<dbReference type="DNASU" id="880894"/>
<dbReference type="GeneID" id="880894"/>
<dbReference type="KEGG" id="pae:PA0025"/>
<dbReference type="PATRIC" id="fig|208964.12.peg.24"/>
<dbReference type="PseudoCAP" id="PA0025"/>
<dbReference type="HOGENOM" id="CLU_044063_2_1_6"/>
<dbReference type="InParanoid" id="P43904"/>
<dbReference type="OrthoDB" id="9776868at2"/>
<dbReference type="PhylomeDB" id="P43904"/>
<dbReference type="BioCyc" id="PAER208964:G1FZ6-25-MONOMER"/>
<dbReference type="UniPathway" id="UPA00053">
    <property type="reaction ID" value="UER00087"/>
</dbReference>
<dbReference type="Proteomes" id="UP000002438">
    <property type="component" value="Chromosome"/>
</dbReference>
<dbReference type="GO" id="GO:0005829">
    <property type="term" value="C:cytosol"/>
    <property type="evidence" value="ECO:0000318"/>
    <property type="project" value="GO_Central"/>
</dbReference>
<dbReference type="GO" id="GO:0050661">
    <property type="term" value="F:NADP binding"/>
    <property type="evidence" value="ECO:0000318"/>
    <property type="project" value="GO_Central"/>
</dbReference>
<dbReference type="GO" id="GO:0004764">
    <property type="term" value="F:shikimate 3-dehydrogenase (NADP+) activity"/>
    <property type="evidence" value="ECO:0000318"/>
    <property type="project" value="GO_Central"/>
</dbReference>
<dbReference type="GO" id="GO:0008652">
    <property type="term" value="P:amino acid biosynthetic process"/>
    <property type="evidence" value="ECO:0007669"/>
    <property type="project" value="UniProtKB-KW"/>
</dbReference>
<dbReference type="GO" id="GO:0009073">
    <property type="term" value="P:aromatic amino acid family biosynthetic process"/>
    <property type="evidence" value="ECO:0007669"/>
    <property type="project" value="UniProtKB-KW"/>
</dbReference>
<dbReference type="GO" id="GO:0009423">
    <property type="term" value="P:chorismate biosynthetic process"/>
    <property type="evidence" value="ECO:0000318"/>
    <property type="project" value="GO_Central"/>
</dbReference>
<dbReference type="GO" id="GO:0019632">
    <property type="term" value="P:shikimate metabolic process"/>
    <property type="evidence" value="ECO:0000318"/>
    <property type="project" value="GO_Central"/>
</dbReference>
<dbReference type="CDD" id="cd01065">
    <property type="entry name" value="NAD_bind_Shikimate_DH"/>
    <property type="match status" value="1"/>
</dbReference>
<dbReference type="FunFam" id="3.40.50.10860:FF:000006">
    <property type="entry name" value="Shikimate dehydrogenase (NADP(+))"/>
    <property type="match status" value="1"/>
</dbReference>
<dbReference type="FunFam" id="3.40.50.720:FF:000104">
    <property type="entry name" value="Shikimate dehydrogenase (NADP(+))"/>
    <property type="match status" value="1"/>
</dbReference>
<dbReference type="Gene3D" id="3.40.50.10860">
    <property type="entry name" value="Leucine Dehydrogenase, chain A, domain 1"/>
    <property type="match status" value="1"/>
</dbReference>
<dbReference type="Gene3D" id="3.40.50.720">
    <property type="entry name" value="NAD(P)-binding Rossmann-like Domain"/>
    <property type="match status" value="1"/>
</dbReference>
<dbReference type="HAMAP" id="MF_00222">
    <property type="entry name" value="Shikimate_DH_AroE"/>
    <property type="match status" value="1"/>
</dbReference>
<dbReference type="InterPro" id="IPR046346">
    <property type="entry name" value="Aminoacid_DH-like_N_sf"/>
</dbReference>
<dbReference type="InterPro" id="IPR036291">
    <property type="entry name" value="NAD(P)-bd_dom_sf"/>
</dbReference>
<dbReference type="InterPro" id="IPR041121">
    <property type="entry name" value="SDH_C"/>
</dbReference>
<dbReference type="InterPro" id="IPR011342">
    <property type="entry name" value="Shikimate_DH"/>
</dbReference>
<dbReference type="InterPro" id="IPR013708">
    <property type="entry name" value="Shikimate_DH-bd_N"/>
</dbReference>
<dbReference type="InterPro" id="IPR022893">
    <property type="entry name" value="Shikimate_DH_fam"/>
</dbReference>
<dbReference type="InterPro" id="IPR006151">
    <property type="entry name" value="Shikm_DH/Glu-tRNA_Rdtase"/>
</dbReference>
<dbReference type="NCBIfam" id="TIGR00507">
    <property type="entry name" value="aroE"/>
    <property type="match status" value="1"/>
</dbReference>
<dbReference type="NCBIfam" id="NF001310">
    <property type="entry name" value="PRK00258.1-2"/>
    <property type="match status" value="1"/>
</dbReference>
<dbReference type="PANTHER" id="PTHR21089:SF1">
    <property type="entry name" value="BIFUNCTIONAL 3-DEHYDROQUINATE DEHYDRATASE_SHIKIMATE DEHYDROGENASE, CHLOROPLASTIC"/>
    <property type="match status" value="1"/>
</dbReference>
<dbReference type="PANTHER" id="PTHR21089">
    <property type="entry name" value="SHIKIMATE DEHYDROGENASE"/>
    <property type="match status" value="1"/>
</dbReference>
<dbReference type="Pfam" id="PF18317">
    <property type="entry name" value="SDH_C"/>
    <property type="match status" value="1"/>
</dbReference>
<dbReference type="Pfam" id="PF01488">
    <property type="entry name" value="Shikimate_DH"/>
    <property type="match status" value="1"/>
</dbReference>
<dbReference type="Pfam" id="PF08501">
    <property type="entry name" value="Shikimate_dh_N"/>
    <property type="match status" value="1"/>
</dbReference>
<dbReference type="SUPFAM" id="SSF53223">
    <property type="entry name" value="Aminoacid dehydrogenase-like, N-terminal domain"/>
    <property type="match status" value="1"/>
</dbReference>
<dbReference type="SUPFAM" id="SSF51735">
    <property type="entry name" value="NAD(P)-binding Rossmann-fold domains"/>
    <property type="match status" value="1"/>
</dbReference>
<keyword id="KW-0028">Amino-acid biosynthesis</keyword>
<keyword id="KW-0057">Aromatic amino acid biosynthesis</keyword>
<keyword id="KW-0521">NADP</keyword>
<keyword id="KW-0560">Oxidoreductase</keyword>
<keyword id="KW-1185">Reference proteome</keyword>
<name>AROE_PSEAE</name>
<evidence type="ECO:0000255" key="1">
    <source>
        <dbReference type="HAMAP-Rule" id="MF_00222"/>
    </source>
</evidence>
<evidence type="ECO:0000305" key="2"/>
<sequence length="274" mass="29485">MDRYCVFGNPIGHSKSPLIHRLFAEQTGEALVYDAQLAPLDDFPGFARRFFEQGKGANVTVPFKEEAYRLVDELSERATRAGAVNTLIRLADGRLRGDNTDGAGLLRDLTANAGVELRGKRVLLLGAGGAVRGVLEPFLGECPAELLIANRTARKAVDLAERFADLGAVHGCGFAEVEGPFDLIVNGTSASLAGDVPPLAQSVIEPGRTVCYDMMYAKEPTAFNRWAAERGAARTLDGLGMLVEQAAEAFFLWRGVRPASAPVLETLRRQLATV</sequence>
<proteinExistence type="inferred from homology"/>
<accession>P43904</accession>
<gene>
    <name evidence="1" type="primary">aroE</name>
    <name type="ordered locus">PA0025</name>
</gene>